<name>FMT_RICTY</name>
<comment type="function">
    <text evidence="1">Attaches a formyl group to the free amino group of methionyl-tRNA(fMet). The formyl group appears to play a dual role in the initiator identity of N-formylmethionyl-tRNA by promoting its recognition by IF2 and preventing the misappropriation of this tRNA by the elongation apparatus.</text>
</comment>
<comment type="catalytic activity">
    <reaction evidence="1">
        <text>L-methionyl-tRNA(fMet) + (6R)-10-formyltetrahydrofolate = N-formyl-L-methionyl-tRNA(fMet) + (6S)-5,6,7,8-tetrahydrofolate + H(+)</text>
        <dbReference type="Rhea" id="RHEA:24380"/>
        <dbReference type="Rhea" id="RHEA-COMP:9952"/>
        <dbReference type="Rhea" id="RHEA-COMP:9953"/>
        <dbReference type="ChEBI" id="CHEBI:15378"/>
        <dbReference type="ChEBI" id="CHEBI:57453"/>
        <dbReference type="ChEBI" id="CHEBI:78530"/>
        <dbReference type="ChEBI" id="CHEBI:78844"/>
        <dbReference type="ChEBI" id="CHEBI:195366"/>
        <dbReference type="EC" id="2.1.2.9"/>
    </reaction>
</comment>
<comment type="similarity">
    <text evidence="1 2">Belongs to the Fmt family.</text>
</comment>
<comment type="sequence caution" evidence="2">
    <conflict type="erroneous initiation">
        <sequence resource="EMBL-CDS" id="AAU03682"/>
    </conflict>
</comment>
<protein>
    <recommendedName>
        <fullName evidence="1">Methionyl-tRNA formyltransferase</fullName>
        <ecNumber evidence="1">2.1.2.9</ecNumber>
    </recommendedName>
</protein>
<evidence type="ECO:0000255" key="1">
    <source>
        <dbReference type="HAMAP-Rule" id="MF_00182"/>
    </source>
</evidence>
<evidence type="ECO:0000305" key="2"/>
<gene>
    <name evidence="1" type="primary">fmt</name>
    <name type="ordered locus">RT0198</name>
</gene>
<keyword id="KW-0648">Protein biosynthesis</keyword>
<keyword id="KW-0808">Transferase</keyword>
<proteinExistence type="inferred from homology"/>
<accession>O33582</accession>
<accession>Q68XG0</accession>
<dbReference type="EC" id="2.1.2.9" evidence="1"/>
<dbReference type="EMBL" id="AE017197">
    <property type="protein sequence ID" value="AAU03682.1"/>
    <property type="status" value="ALT_INIT"/>
    <property type="molecule type" value="Genomic_DNA"/>
</dbReference>
<dbReference type="EMBL" id="Y13133">
    <property type="protein sequence ID" value="CAA73600.1"/>
    <property type="molecule type" value="Genomic_DNA"/>
</dbReference>
<dbReference type="RefSeq" id="WP_011190669.1">
    <property type="nucleotide sequence ID" value="NC_006142.1"/>
</dbReference>
<dbReference type="SMR" id="O33582"/>
<dbReference type="KEGG" id="rty:RT0198"/>
<dbReference type="eggNOG" id="COG0223">
    <property type="taxonomic scope" value="Bacteria"/>
</dbReference>
<dbReference type="HOGENOM" id="CLU_033347_1_1_5"/>
<dbReference type="OrthoDB" id="9802815at2"/>
<dbReference type="Proteomes" id="UP000000604">
    <property type="component" value="Chromosome"/>
</dbReference>
<dbReference type="GO" id="GO:0005829">
    <property type="term" value="C:cytosol"/>
    <property type="evidence" value="ECO:0007669"/>
    <property type="project" value="TreeGrafter"/>
</dbReference>
<dbReference type="GO" id="GO:0004479">
    <property type="term" value="F:methionyl-tRNA formyltransferase activity"/>
    <property type="evidence" value="ECO:0007669"/>
    <property type="project" value="UniProtKB-UniRule"/>
</dbReference>
<dbReference type="CDD" id="cd08646">
    <property type="entry name" value="FMT_core_Met-tRNA-FMT_N"/>
    <property type="match status" value="1"/>
</dbReference>
<dbReference type="CDD" id="cd08704">
    <property type="entry name" value="Met_tRNA_FMT_C"/>
    <property type="match status" value="1"/>
</dbReference>
<dbReference type="Gene3D" id="3.40.50.12230">
    <property type="match status" value="1"/>
</dbReference>
<dbReference type="HAMAP" id="MF_00182">
    <property type="entry name" value="Formyl_trans"/>
    <property type="match status" value="1"/>
</dbReference>
<dbReference type="InterPro" id="IPR005794">
    <property type="entry name" value="Fmt"/>
</dbReference>
<dbReference type="InterPro" id="IPR005793">
    <property type="entry name" value="Formyl_trans_C"/>
</dbReference>
<dbReference type="InterPro" id="IPR002376">
    <property type="entry name" value="Formyl_transf_N"/>
</dbReference>
<dbReference type="InterPro" id="IPR036477">
    <property type="entry name" value="Formyl_transf_N_sf"/>
</dbReference>
<dbReference type="InterPro" id="IPR011034">
    <property type="entry name" value="Formyl_transferase-like_C_sf"/>
</dbReference>
<dbReference type="InterPro" id="IPR044135">
    <property type="entry name" value="Met-tRNA-FMT_C"/>
</dbReference>
<dbReference type="InterPro" id="IPR041711">
    <property type="entry name" value="Met-tRNA-FMT_N"/>
</dbReference>
<dbReference type="NCBIfam" id="TIGR00460">
    <property type="entry name" value="fmt"/>
    <property type="match status" value="1"/>
</dbReference>
<dbReference type="PANTHER" id="PTHR11138">
    <property type="entry name" value="METHIONYL-TRNA FORMYLTRANSFERASE"/>
    <property type="match status" value="1"/>
</dbReference>
<dbReference type="PANTHER" id="PTHR11138:SF5">
    <property type="entry name" value="METHIONYL-TRNA FORMYLTRANSFERASE, MITOCHONDRIAL"/>
    <property type="match status" value="1"/>
</dbReference>
<dbReference type="Pfam" id="PF02911">
    <property type="entry name" value="Formyl_trans_C"/>
    <property type="match status" value="1"/>
</dbReference>
<dbReference type="Pfam" id="PF00551">
    <property type="entry name" value="Formyl_trans_N"/>
    <property type="match status" value="1"/>
</dbReference>
<dbReference type="SUPFAM" id="SSF50486">
    <property type="entry name" value="FMT C-terminal domain-like"/>
    <property type="match status" value="1"/>
</dbReference>
<dbReference type="SUPFAM" id="SSF53328">
    <property type="entry name" value="Formyltransferase"/>
    <property type="match status" value="1"/>
</dbReference>
<feature type="chain" id="PRO_0000083037" description="Methionyl-tRNA formyltransferase">
    <location>
        <begin position="1"/>
        <end position="303"/>
    </location>
</feature>
<feature type="binding site" evidence="1">
    <location>
        <begin position="108"/>
        <end position="111"/>
    </location>
    <ligand>
        <name>(6S)-5,6,7,8-tetrahydrofolate</name>
        <dbReference type="ChEBI" id="CHEBI:57453"/>
    </ligand>
</feature>
<sequence length="303" mass="33913">MKVIFMGTPEFAVPTLKKLIIHHEVKAVFTQQPKAKGRGLYLAKSPIHQLAFEHQIPVYSPSTLRNDETINLINKVDADIIVVIAYGFIVPKAILEAKKYGCLNIHPSDLPRHRGAAPLQRTIIEGDLKSSVCIMRMDSGLDTGDILLKEDLNLEKRITLDELSNRCAHLGAELLIQTLANIDNIVPVKQSSNGVTYAHKLTKAEGKINWYESAYSIDCKIRGMNPWPGAYFSYNDKIIKILEAEYLNYNHHFIPGTVISNKLEIACGSGILRVTKLQQESKKALNIEAFLRGTNILKDTILK</sequence>
<organism>
    <name type="scientific">Rickettsia typhi (strain ATCC VR-144 / Wilmington)</name>
    <dbReference type="NCBI Taxonomy" id="257363"/>
    <lineage>
        <taxon>Bacteria</taxon>
        <taxon>Pseudomonadati</taxon>
        <taxon>Pseudomonadota</taxon>
        <taxon>Alphaproteobacteria</taxon>
        <taxon>Rickettsiales</taxon>
        <taxon>Rickettsiaceae</taxon>
        <taxon>Rickettsieae</taxon>
        <taxon>Rickettsia</taxon>
        <taxon>typhus group</taxon>
    </lineage>
</organism>
<reference key="1">
    <citation type="journal article" date="2004" name="J. Bacteriol.">
        <title>Complete genome sequence of Rickettsia typhi and comparison with sequences of other Rickettsiae.</title>
        <authorList>
            <person name="McLeod M.P."/>
            <person name="Qin X."/>
            <person name="Karpathy S.E."/>
            <person name="Gioia J."/>
            <person name="Highlander S.K."/>
            <person name="Fox G.E."/>
            <person name="McNeill T.Z."/>
            <person name="Jiang H."/>
            <person name="Muzny D."/>
            <person name="Jacob L.S."/>
            <person name="Hawes A.C."/>
            <person name="Sodergren E."/>
            <person name="Gill R."/>
            <person name="Hume J."/>
            <person name="Morgan M."/>
            <person name="Fan G."/>
            <person name="Amin A.G."/>
            <person name="Gibbs R.A."/>
            <person name="Hong C."/>
            <person name="Yu X.-J."/>
            <person name="Walker D.H."/>
            <person name="Weinstock G.M."/>
        </authorList>
    </citation>
    <scope>NUCLEOTIDE SEQUENCE [LARGE SCALE GENOMIC DNA]</scope>
    <source>
        <strain>ATCC VR-144 / Wilmington</strain>
    </source>
</reference>
<reference key="2">
    <citation type="submission" date="1997-05" db="EMBL/GenBank/DDBJ databases">
        <title>Rearrangement of the rRNA genes in Rickettsia preceeded the divergence of the typhus and the spotted fever group Rickettsia.</title>
        <authorList>
            <person name="Andersson S.G.E."/>
            <person name="Stothard D.R."/>
            <person name="Romedenne M."/>
            <person name="Viseur N."/>
            <person name="Fuerst P."/>
            <person name="Kurland C.G."/>
        </authorList>
    </citation>
    <scope>NUCLEOTIDE SEQUENCE [GENOMIC DNA] OF 231-303</scope>
</reference>